<proteinExistence type="inferred from homology"/>
<dbReference type="EC" id="3.1.26.3" evidence="1"/>
<dbReference type="EMBL" id="CP000422">
    <property type="protein sequence ID" value="ABJ67902.1"/>
    <property type="molecule type" value="Genomic_DNA"/>
</dbReference>
<dbReference type="RefSeq" id="WP_002833571.1">
    <property type="nucleotide sequence ID" value="NC_008525.1"/>
</dbReference>
<dbReference type="SMR" id="Q03FX0"/>
<dbReference type="STRING" id="278197.PEPE_0842"/>
<dbReference type="GeneID" id="33061873"/>
<dbReference type="KEGG" id="ppe:PEPE_0842"/>
<dbReference type="eggNOG" id="COG0571">
    <property type="taxonomic scope" value="Bacteria"/>
</dbReference>
<dbReference type="HOGENOM" id="CLU_000907_1_3_9"/>
<dbReference type="OrthoDB" id="9805026at2"/>
<dbReference type="Proteomes" id="UP000000773">
    <property type="component" value="Chromosome"/>
</dbReference>
<dbReference type="GO" id="GO:0005737">
    <property type="term" value="C:cytoplasm"/>
    <property type="evidence" value="ECO:0007669"/>
    <property type="project" value="UniProtKB-SubCell"/>
</dbReference>
<dbReference type="GO" id="GO:0003725">
    <property type="term" value="F:double-stranded RNA binding"/>
    <property type="evidence" value="ECO:0007669"/>
    <property type="project" value="TreeGrafter"/>
</dbReference>
<dbReference type="GO" id="GO:0046872">
    <property type="term" value="F:metal ion binding"/>
    <property type="evidence" value="ECO:0007669"/>
    <property type="project" value="UniProtKB-KW"/>
</dbReference>
<dbReference type="GO" id="GO:0004525">
    <property type="term" value="F:ribonuclease III activity"/>
    <property type="evidence" value="ECO:0007669"/>
    <property type="project" value="UniProtKB-UniRule"/>
</dbReference>
<dbReference type="GO" id="GO:0019843">
    <property type="term" value="F:rRNA binding"/>
    <property type="evidence" value="ECO:0007669"/>
    <property type="project" value="UniProtKB-KW"/>
</dbReference>
<dbReference type="GO" id="GO:0006397">
    <property type="term" value="P:mRNA processing"/>
    <property type="evidence" value="ECO:0007669"/>
    <property type="project" value="UniProtKB-UniRule"/>
</dbReference>
<dbReference type="GO" id="GO:0010468">
    <property type="term" value="P:regulation of gene expression"/>
    <property type="evidence" value="ECO:0007669"/>
    <property type="project" value="TreeGrafter"/>
</dbReference>
<dbReference type="GO" id="GO:0006364">
    <property type="term" value="P:rRNA processing"/>
    <property type="evidence" value="ECO:0007669"/>
    <property type="project" value="UniProtKB-UniRule"/>
</dbReference>
<dbReference type="GO" id="GO:0008033">
    <property type="term" value="P:tRNA processing"/>
    <property type="evidence" value="ECO:0007669"/>
    <property type="project" value="UniProtKB-KW"/>
</dbReference>
<dbReference type="CDD" id="cd10845">
    <property type="entry name" value="DSRM_RNAse_III_family"/>
    <property type="match status" value="1"/>
</dbReference>
<dbReference type="CDD" id="cd00593">
    <property type="entry name" value="RIBOc"/>
    <property type="match status" value="1"/>
</dbReference>
<dbReference type="FunFam" id="1.10.1520.10:FF:000001">
    <property type="entry name" value="Ribonuclease 3"/>
    <property type="match status" value="1"/>
</dbReference>
<dbReference type="Gene3D" id="3.30.160.20">
    <property type="match status" value="1"/>
</dbReference>
<dbReference type="Gene3D" id="1.10.1520.10">
    <property type="entry name" value="Ribonuclease III domain"/>
    <property type="match status" value="1"/>
</dbReference>
<dbReference type="HAMAP" id="MF_00104">
    <property type="entry name" value="RNase_III"/>
    <property type="match status" value="1"/>
</dbReference>
<dbReference type="InterPro" id="IPR014720">
    <property type="entry name" value="dsRBD_dom"/>
</dbReference>
<dbReference type="InterPro" id="IPR011907">
    <property type="entry name" value="RNase_III"/>
</dbReference>
<dbReference type="InterPro" id="IPR000999">
    <property type="entry name" value="RNase_III_dom"/>
</dbReference>
<dbReference type="InterPro" id="IPR036389">
    <property type="entry name" value="RNase_III_sf"/>
</dbReference>
<dbReference type="NCBIfam" id="TIGR02191">
    <property type="entry name" value="RNaseIII"/>
    <property type="match status" value="1"/>
</dbReference>
<dbReference type="PANTHER" id="PTHR11207:SF0">
    <property type="entry name" value="RIBONUCLEASE 3"/>
    <property type="match status" value="1"/>
</dbReference>
<dbReference type="PANTHER" id="PTHR11207">
    <property type="entry name" value="RIBONUCLEASE III"/>
    <property type="match status" value="1"/>
</dbReference>
<dbReference type="Pfam" id="PF00035">
    <property type="entry name" value="dsrm"/>
    <property type="match status" value="1"/>
</dbReference>
<dbReference type="Pfam" id="PF14622">
    <property type="entry name" value="Ribonucleas_3_3"/>
    <property type="match status" value="1"/>
</dbReference>
<dbReference type="SMART" id="SM00358">
    <property type="entry name" value="DSRM"/>
    <property type="match status" value="1"/>
</dbReference>
<dbReference type="SMART" id="SM00535">
    <property type="entry name" value="RIBOc"/>
    <property type="match status" value="1"/>
</dbReference>
<dbReference type="SUPFAM" id="SSF54768">
    <property type="entry name" value="dsRNA-binding domain-like"/>
    <property type="match status" value="1"/>
</dbReference>
<dbReference type="SUPFAM" id="SSF69065">
    <property type="entry name" value="RNase III domain-like"/>
    <property type="match status" value="1"/>
</dbReference>
<dbReference type="PROSITE" id="PS50137">
    <property type="entry name" value="DS_RBD"/>
    <property type="match status" value="1"/>
</dbReference>
<dbReference type="PROSITE" id="PS50142">
    <property type="entry name" value="RNASE_3_2"/>
    <property type="match status" value="1"/>
</dbReference>
<sequence length="232" mass="26566">MIKALEDDLSQTFDIHFNNHALLDEAFTQASYVNEHPHQELKFYERIEFLGDAVLQLIVSEYLFKRYPEMPQGKLTRLRAAMVCEASFSDFAKECHFDQYIRLGKGEEKSGARQRSSLLCDIFESFIGALYLDQGRAAVERFVRIVIFPKLDEGKFDHIIDHKSELQELLQKNGDVEIDYELVSEEGPENDLIFTVSVTADHKKLATGTGHSKKVAEQNAANQALQLLRRPK</sequence>
<name>RNC_PEDPA</name>
<protein>
    <recommendedName>
        <fullName evidence="1">Ribonuclease 3</fullName>
        <ecNumber evidence="1">3.1.26.3</ecNumber>
    </recommendedName>
    <alternativeName>
        <fullName evidence="1">Ribonuclease III</fullName>
        <shortName evidence="1">RNase III</shortName>
    </alternativeName>
</protein>
<evidence type="ECO:0000255" key="1">
    <source>
        <dbReference type="HAMAP-Rule" id="MF_00104"/>
    </source>
</evidence>
<accession>Q03FX0</accession>
<keyword id="KW-0963">Cytoplasm</keyword>
<keyword id="KW-0255">Endonuclease</keyword>
<keyword id="KW-0378">Hydrolase</keyword>
<keyword id="KW-0460">Magnesium</keyword>
<keyword id="KW-0479">Metal-binding</keyword>
<keyword id="KW-0507">mRNA processing</keyword>
<keyword id="KW-0540">Nuclease</keyword>
<keyword id="KW-0694">RNA-binding</keyword>
<keyword id="KW-0698">rRNA processing</keyword>
<keyword id="KW-0699">rRNA-binding</keyword>
<keyword id="KW-0819">tRNA processing</keyword>
<comment type="function">
    <text evidence="1">Digests double-stranded RNA. Involved in the processing of primary rRNA transcript to yield the immediate precursors to the large and small rRNAs (23S and 16S). Processes some mRNAs, and tRNAs when they are encoded in the rRNA operon. Processes pre-crRNA and tracrRNA of type II CRISPR loci if present in the organism.</text>
</comment>
<comment type="catalytic activity">
    <reaction evidence="1">
        <text>Endonucleolytic cleavage to 5'-phosphomonoester.</text>
        <dbReference type="EC" id="3.1.26.3"/>
    </reaction>
</comment>
<comment type="cofactor">
    <cofactor evidence="1">
        <name>Mg(2+)</name>
        <dbReference type="ChEBI" id="CHEBI:18420"/>
    </cofactor>
</comment>
<comment type="subunit">
    <text evidence="1">Homodimer.</text>
</comment>
<comment type="subcellular location">
    <subcellularLocation>
        <location evidence="1">Cytoplasm</location>
    </subcellularLocation>
</comment>
<comment type="similarity">
    <text evidence="1">Belongs to the ribonuclease III family.</text>
</comment>
<gene>
    <name evidence="1" type="primary">rnc</name>
    <name type="ordered locus">PEPE_0842</name>
</gene>
<feature type="chain" id="PRO_1000075784" description="Ribonuclease 3">
    <location>
        <begin position="1"/>
        <end position="232"/>
    </location>
</feature>
<feature type="domain" description="RNase III" evidence="1">
    <location>
        <begin position="2"/>
        <end position="135"/>
    </location>
</feature>
<feature type="domain" description="DRBM" evidence="1">
    <location>
        <begin position="161"/>
        <end position="230"/>
    </location>
</feature>
<feature type="active site" evidence="1">
    <location>
        <position position="52"/>
    </location>
</feature>
<feature type="active site" evidence="1">
    <location>
        <position position="124"/>
    </location>
</feature>
<feature type="binding site" evidence="1">
    <location>
        <position position="48"/>
    </location>
    <ligand>
        <name>Mg(2+)</name>
        <dbReference type="ChEBI" id="CHEBI:18420"/>
    </ligand>
</feature>
<feature type="binding site" evidence="1">
    <location>
        <position position="121"/>
    </location>
    <ligand>
        <name>Mg(2+)</name>
        <dbReference type="ChEBI" id="CHEBI:18420"/>
    </ligand>
</feature>
<feature type="binding site" evidence="1">
    <location>
        <position position="124"/>
    </location>
    <ligand>
        <name>Mg(2+)</name>
        <dbReference type="ChEBI" id="CHEBI:18420"/>
    </ligand>
</feature>
<organism>
    <name type="scientific">Pediococcus pentosaceus (strain ATCC 25745 / CCUG 21536 / LMG 10740 / 183-1w)</name>
    <dbReference type="NCBI Taxonomy" id="278197"/>
    <lineage>
        <taxon>Bacteria</taxon>
        <taxon>Bacillati</taxon>
        <taxon>Bacillota</taxon>
        <taxon>Bacilli</taxon>
        <taxon>Lactobacillales</taxon>
        <taxon>Lactobacillaceae</taxon>
        <taxon>Pediococcus</taxon>
    </lineage>
</organism>
<reference key="1">
    <citation type="journal article" date="2006" name="Proc. Natl. Acad. Sci. U.S.A.">
        <title>Comparative genomics of the lactic acid bacteria.</title>
        <authorList>
            <person name="Makarova K.S."/>
            <person name="Slesarev A."/>
            <person name="Wolf Y.I."/>
            <person name="Sorokin A."/>
            <person name="Mirkin B."/>
            <person name="Koonin E.V."/>
            <person name="Pavlov A."/>
            <person name="Pavlova N."/>
            <person name="Karamychev V."/>
            <person name="Polouchine N."/>
            <person name="Shakhova V."/>
            <person name="Grigoriev I."/>
            <person name="Lou Y."/>
            <person name="Rohksar D."/>
            <person name="Lucas S."/>
            <person name="Huang K."/>
            <person name="Goodstein D.M."/>
            <person name="Hawkins T."/>
            <person name="Plengvidhya V."/>
            <person name="Welker D."/>
            <person name="Hughes J."/>
            <person name="Goh Y."/>
            <person name="Benson A."/>
            <person name="Baldwin K."/>
            <person name="Lee J.-H."/>
            <person name="Diaz-Muniz I."/>
            <person name="Dosti B."/>
            <person name="Smeianov V."/>
            <person name="Wechter W."/>
            <person name="Barabote R."/>
            <person name="Lorca G."/>
            <person name="Altermann E."/>
            <person name="Barrangou R."/>
            <person name="Ganesan B."/>
            <person name="Xie Y."/>
            <person name="Rawsthorne H."/>
            <person name="Tamir D."/>
            <person name="Parker C."/>
            <person name="Breidt F."/>
            <person name="Broadbent J.R."/>
            <person name="Hutkins R."/>
            <person name="O'Sullivan D."/>
            <person name="Steele J."/>
            <person name="Unlu G."/>
            <person name="Saier M.H. Jr."/>
            <person name="Klaenhammer T."/>
            <person name="Richardson P."/>
            <person name="Kozyavkin S."/>
            <person name="Weimer B.C."/>
            <person name="Mills D.A."/>
        </authorList>
    </citation>
    <scope>NUCLEOTIDE SEQUENCE [LARGE SCALE GENOMIC DNA]</scope>
    <source>
        <strain>ATCC 25745 / CCUG 21536 / LMG 10740 / 183-1w</strain>
    </source>
</reference>